<feature type="chain" id="PRO_0000269707" description="ATP synthase F(0) complex subunit 8">
    <location>
        <begin position="1"/>
        <end position="67"/>
    </location>
</feature>
<feature type="transmembrane region" description="Helical" evidence="4">
    <location>
        <begin position="8"/>
        <end position="24"/>
    </location>
</feature>
<feature type="modified residue" description="N6-acetyllysine; alternate" evidence="2">
    <location>
        <position position="54"/>
    </location>
</feature>
<feature type="modified residue" description="N6-succinyllysine; alternate" evidence="2">
    <location>
        <position position="54"/>
    </location>
</feature>
<feature type="modified residue" description="N6-acetyllysine" evidence="2">
    <location>
        <position position="57"/>
    </location>
</feature>
<feature type="sequence variant" evidence="5">
    <original>S</original>
    <variation>P</variation>
    <location>
        <position position="41"/>
    </location>
</feature>
<feature type="sequence variant" evidence="5">
    <original>A</original>
    <variation>T</variation>
    <location>
        <position position="42"/>
    </location>
</feature>
<feature type="sequence variant" evidence="5">
    <original>N</original>
    <variation>K</variation>
    <location>
        <position position="49"/>
    </location>
</feature>
<geneLocation type="mitochondrion"/>
<name>ATP8_CANLU</name>
<comment type="function">
    <text evidence="1 3">Subunit 8, of the mitochondrial membrane ATP synthase complex (F(1)F(0) ATP synthase or Complex V) that produces ATP from ADP in the presence of a proton gradient across the membrane which is generated by electron transport complexes of the respiratory chain. ATP synthase complex consist of a soluble F(1) head domain - the catalytic core - and a membrane F(1) domain - the membrane proton channel. These two domains are linked by a central stalk rotating inside the F(1) region and a stationary peripheral stalk. During catalysis, ATP synthesis in the catalytic domain of F(1) is coupled via a rotary mechanism of the central stalk subunits to proton translocation (By similarity). In vivo, can only synthesize ATP although its ATP hydrolase activity can be activated artificially in vitro (By similarity). Part of the complex F(0) domain (By similarity).</text>
</comment>
<comment type="subunit">
    <text evidence="1">Component of the ATP synthase complex composed at least of ATP5F1A/subunit alpha, ATP5F1B/subunit beta, ATP5MC1/subunit c (homooctomer), MT-ATP6/subunit a, MT-ATP8/subunit 8, ATP5ME/subunit e, ATP5MF/subunit f, ATP5MG/subunit g, ATP5MK/subunit k, ATP5MJ/subunit j, ATP5F1C/subunit gamma, ATP5F1D/subunit delta, ATP5F1E/subunit epsilon, ATP5PF/subunit F6, ATP5PB/subunit b, ATP5PD/subunit d, ATP5PO/subunit OSCP. ATP synthase complex consists of a soluble F(1) head domain (subunits alpha(3) and beta(3)) - the catalytic core - and a membrane F(0) domain - the membrane proton channel (subunits c, a, 8, e, f, g, k and j). These two domains are linked by a central stalk (subunits gamma, delta, and epsilon) rotating inside the F1 region and a stationary peripheral stalk (subunits F6, b, d, and OSCP). Interacts with PRICKLE3.</text>
</comment>
<comment type="subcellular location">
    <subcellularLocation>
        <location>Mitochondrion membrane</location>
        <topology>Single-pass membrane protein</topology>
    </subcellularLocation>
</comment>
<comment type="similarity">
    <text evidence="6">Belongs to the ATPase protein 8 family.</text>
</comment>
<evidence type="ECO:0000250" key="1">
    <source>
        <dbReference type="UniProtKB" id="P03928"/>
    </source>
</evidence>
<evidence type="ECO:0000250" key="2">
    <source>
        <dbReference type="UniProtKB" id="P03930"/>
    </source>
</evidence>
<evidence type="ECO:0000250" key="3">
    <source>
        <dbReference type="UniProtKB" id="P19483"/>
    </source>
</evidence>
<evidence type="ECO:0000255" key="4"/>
<evidence type="ECO:0000269" key="5">
    <source>
    </source>
</evidence>
<evidence type="ECO:0000305" key="6"/>
<protein>
    <recommendedName>
        <fullName evidence="1">ATP synthase F(0) complex subunit 8</fullName>
    </recommendedName>
    <alternativeName>
        <fullName>A6L</fullName>
    </alternativeName>
    <alternativeName>
        <fullName>F-ATPase subunit 8</fullName>
    </alternativeName>
</protein>
<keyword id="KW-0007">Acetylation</keyword>
<keyword id="KW-0066">ATP synthesis</keyword>
<keyword id="KW-0138">CF(0)</keyword>
<keyword id="KW-0375">Hydrogen ion transport</keyword>
<keyword id="KW-0406">Ion transport</keyword>
<keyword id="KW-0472">Membrane</keyword>
<keyword id="KW-0496">Mitochondrion</keyword>
<keyword id="KW-0812">Transmembrane</keyword>
<keyword id="KW-1133">Transmembrane helix</keyword>
<keyword id="KW-0813">Transport</keyword>
<accession>Q3L6Z3</accession>
<accession>Q1HK99</accession>
<accession>Q1HKB2</accession>
<gene>
    <name evidence="1" type="primary">MT-ATP8</name>
    <name type="synonym">ATP8</name>
    <name type="synonym">ATPASE8</name>
    <name type="synonym">MTATP8</name>
</gene>
<dbReference type="EMBL" id="AY598495">
    <property type="protein sequence ID" value="AAU00441.1"/>
    <property type="molecule type" value="Genomic_DNA"/>
</dbReference>
<dbReference type="EMBL" id="DQ480503">
    <property type="protein sequence ID" value="ABE48159.1"/>
    <property type="molecule type" value="Genomic_DNA"/>
</dbReference>
<dbReference type="EMBL" id="DQ480504">
    <property type="protein sequence ID" value="ABE48172.1"/>
    <property type="molecule type" value="Genomic_DNA"/>
</dbReference>
<dbReference type="EMBL" id="DQ480505">
    <property type="protein sequence ID" value="ABE48185.1"/>
    <property type="molecule type" value="Genomic_DNA"/>
</dbReference>
<dbReference type="EMBL" id="DQ480506">
    <property type="protein sequence ID" value="ABE48198.1"/>
    <property type="molecule type" value="Genomic_DNA"/>
</dbReference>
<dbReference type="EMBL" id="DQ480507">
    <property type="protein sequence ID" value="ABE48211.1"/>
    <property type="molecule type" value="Genomic_DNA"/>
</dbReference>
<dbReference type="EMBL" id="DQ480508">
    <property type="protein sequence ID" value="ABE48224.1"/>
    <property type="molecule type" value="Genomic_DNA"/>
</dbReference>
<dbReference type="RefSeq" id="YP_626732.1">
    <property type="nucleotide sequence ID" value="NC_008092.1"/>
</dbReference>
<dbReference type="SMR" id="Q3L6Z3"/>
<dbReference type="GeneID" id="4097768"/>
<dbReference type="CTD" id="4509"/>
<dbReference type="GO" id="GO:0031966">
    <property type="term" value="C:mitochondrial membrane"/>
    <property type="evidence" value="ECO:0007669"/>
    <property type="project" value="UniProtKB-SubCell"/>
</dbReference>
<dbReference type="GO" id="GO:0045259">
    <property type="term" value="C:proton-transporting ATP synthase complex"/>
    <property type="evidence" value="ECO:0000250"/>
    <property type="project" value="UniProtKB"/>
</dbReference>
<dbReference type="GO" id="GO:0015078">
    <property type="term" value="F:proton transmembrane transporter activity"/>
    <property type="evidence" value="ECO:0007669"/>
    <property type="project" value="InterPro"/>
</dbReference>
<dbReference type="GO" id="GO:0015986">
    <property type="term" value="P:proton motive force-driven ATP synthesis"/>
    <property type="evidence" value="ECO:0007669"/>
    <property type="project" value="InterPro"/>
</dbReference>
<dbReference type="InterPro" id="IPR039017">
    <property type="entry name" value="ATP8_mammal"/>
</dbReference>
<dbReference type="InterPro" id="IPR001421">
    <property type="entry name" value="ATP8_metazoa"/>
</dbReference>
<dbReference type="PANTHER" id="PTHR13722">
    <property type="entry name" value="ATP SYNTHASE PROTEIN 8"/>
    <property type="match status" value="1"/>
</dbReference>
<dbReference type="PANTHER" id="PTHR13722:SF0">
    <property type="entry name" value="ATP SYNTHASE PROTEIN 8"/>
    <property type="match status" value="1"/>
</dbReference>
<dbReference type="Pfam" id="PF00895">
    <property type="entry name" value="ATP-synt_8"/>
    <property type="match status" value="1"/>
</dbReference>
<reference key="1">
    <citation type="journal article" date="2005" name="Mol. Phylogenet. Evol.">
        <title>A phylogeny of the Caniformia (order Carnivora) based on 12 complete protein-coding mitochondrial genes.</title>
        <authorList>
            <person name="Delisle I."/>
            <person name="Strobeck C."/>
        </authorList>
    </citation>
    <scope>NUCLEOTIDE SEQUENCE [GENOMIC DNA]</scope>
</reference>
<reference key="2">
    <citation type="journal article" date="2006" name="Genome Res.">
        <title>Relaxation of selective constraint on dog mitochondrial DNA following domestication.</title>
        <authorList>
            <person name="Bjornerfeldt S."/>
            <person name="Webster M.T."/>
            <person name="Vila C."/>
        </authorList>
    </citation>
    <scope>NUCLEOTIDE SEQUENCE [GENOMIC DNA]</scope>
    <scope>VARIANTS PRO-41; THR-42 AND LYS-49</scope>
</reference>
<organism>
    <name type="scientific">Canis lupus</name>
    <name type="common">Gray wolf</name>
    <dbReference type="NCBI Taxonomy" id="9612"/>
    <lineage>
        <taxon>Eukaryota</taxon>
        <taxon>Metazoa</taxon>
        <taxon>Chordata</taxon>
        <taxon>Craniata</taxon>
        <taxon>Vertebrata</taxon>
        <taxon>Euteleostomi</taxon>
        <taxon>Mammalia</taxon>
        <taxon>Eutheria</taxon>
        <taxon>Laurasiatheria</taxon>
        <taxon>Carnivora</taxon>
        <taxon>Caniformia</taxon>
        <taxon>Canidae</taxon>
        <taxon>Canis</taxon>
    </lineage>
</organism>
<proteinExistence type="inferred from homology"/>
<sequence length="67" mass="7978">MPQLDTSTWFIMIFSMFLTLFILFQLKISNHYYPENPMTKSAKIAGQHNPWENKWTKIYSLLSLPPQ</sequence>